<reference key="1">
    <citation type="journal article" date="2010" name="Genome Biol. Evol.">
        <title>Continuing evolution of Burkholderia mallei through genome reduction and large-scale rearrangements.</title>
        <authorList>
            <person name="Losada L."/>
            <person name="Ronning C.M."/>
            <person name="DeShazer D."/>
            <person name="Woods D."/>
            <person name="Fedorova N."/>
            <person name="Kim H.S."/>
            <person name="Shabalina S.A."/>
            <person name="Pearson T.R."/>
            <person name="Brinkac L."/>
            <person name="Tan P."/>
            <person name="Nandi T."/>
            <person name="Crabtree J."/>
            <person name="Badger J."/>
            <person name="Beckstrom-Sternberg S."/>
            <person name="Saqib M."/>
            <person name="Schutzer S.E."/>
            <person name="Keim P."/>
            <person name="Nierman W.C."/>
        </authorList>
    </citation>
    <scope>NUCLEOTIDE SEQUENCE [LARGE SCALE GENOMIC DNA]</scope>
    <source>
        <strain>NCTC 10229</strain>
    </source>
</reference>
<organism>
    <name type="scientific">Burkholderia mallei (strain NCTC 10229)</name>
    <dbReference type="NCBI Taxonomy" id="412022"/>
    <lineage>
        <taxon>Bacteria</taxon>
        <taxon>Pseudomonadati</taxon>
        <taxon>Pseudomonadota</taxon>
        <taxon>Betaproteobacteria</taxon>
        <taxon>Burkholderiales</taxon>
        <taxon>Burkholderiaceae</taxon>
        <taxon>Burkholderia</taxon>
        <taxon>pseudomallei group</taxon>
    </lineage>
</organism>
<dbReference type="EMBL" id="CP000546">
    <property type="protein sequence ID" value="ABN03590.1"/>
    <property type="molecule type" value="Genomic_DNA"/>
</dbReference>
<dbReference type="RefSeq" id="WP_004194372.1">
    <property type="nucleotide sequence ID" value="NC_008836.1"/>
</dbReference>
<dbReference type="SMR" id="A2S581"/>
<dbReference type="GeneID" id="92980034"/>
<dbReference type="KEGG" id="bml:BMA10229_A1115"/>
<dbReference type="HOGENOM" id="CLU_082184_2_2_4"/>
<dbReference type="Proteomes" id="UP000002283">
    <property type="component" value="Chromosome I"/>
</dbReference>
<dbReference type="GO" id="GO:0022625">
    <property type="term" value="C:cytosolic large ribosomal subunit"/>
    <property type="evidence" value="ECO:0007669"/>
    <property type="project" value="TreeGrafter"/>
</dbReference>
<dbReference type="GO" id="GO:0003729">
    <property type="term" value="F:mRNA binding"/>
    <property type="evidence" value="ECO:0007669"/>
    <property type="project" value="TreeGrafter"/>
</dbReference>
<dbReference type="GO" id="GO:0003735">
    <property type="term" value="F:structural constituent of ribosome"/>
    <property type="evidence" value="ECO:0007669"/>
    <property type="project" value="InterPro"/>
</dbReference>
<dbReference type="GO" id="GO:0017148">
    <property type="term" value="P:negative regulation of translation"/>
    <property type="evidence" value="ECO:0007669"/>
    <property type="project" value="TreeGrafter"/>
</dbReference>
<dbReference type="GO" id="GO:0006412">
    <property type="term" value="P:translation"/>
    <property type="evidence" value="ECO:0007669"/>
    <property type="project" value="UniProtKB-UniRule"/>
</dbReference>
<dbReference type="CDD" id="cd00392">
    <property type="entry name" value="Ribosomal_L13"/>
    <property type="match status" value="1"/>
</dbReference>
<dbReference type="FunFam" id="3.90.1180.10:FF:000001">
    <property type="entry name" value="50S ribosomal protein L13"/>
    <property type="match status" value="1"/>
</dbReference>
<dbReference type="Gene3D" id="3.90.1180.10">
    <property type="entry name" value="Ribosomal protein L13"/>
    <property type="match status" value="1"/>
</dbReference>
<dbReference type="HAMAP" id="MF_01366">
    <property type="entry name" value="Ribosomal_uL13"/>
    <property type="match status" value="1"/>
</dbReference>
<dbReference type="InterPro" id="IPR005822">
    <property type="entry name" value="Ribosomal_uL13"/>
</dbReference>
<dbReference type="InterPro" id="IPR005823">
    <property type="entry name" value="Ribosomal_uL13_bac-type"/>
</dbReference>
<dbReference type="InterPro" id="IPR036899">
    <property type="entry name" value="Ribosomal_uL13_sf"/>
</dbReference>
<dbReference type="NCBIfam" id="TIGR01066">
    <property type="entry name" value="rplM_bact"/>
    <property type="match status" value="1"/>
</dbReference>
<dbReference type="PANTHER" id="PTHR11545:SF2">
    <property type="entry name" value="LARGE RIBOSOMAL SUBUNIT PROTEIN UL13M"/>
    <property type="match status" value="1"/>
</dbReference>
<dbReference type="PANTHER" id="PTHR11545">
    <property type="entry name" value="RIBOSOMAL PROTEIN L13"/>
    <property type="match status" value="1"/>
</dbReference>
<dbReference type="Pfam" id="PF00572">
    <property type="entry name" value="Ribosomal_L13"/>
    <property type="match status" value="1"/>
</dbReference>
<dbReference type="PIRSF" id="PIRSF002181">
    <property type="entry name" value="Ribosomal_L13"/>
    <property type="match status" value="1"/>
</dbReference>
<dbReference type="SUPFAM" id="SSF52161">
    <property type="entry name" value="Ribosomal protein L13"/>
    <property type="match status" value="1"/>
</dbReference>
<sequence>MKTFSAKAHEVTREWYVIDATDKVLGRVASEVARRLRGKHKPEFTPHVDTGDFIIVINASKLKVTGNKTLDKKYYRHSGYPGGIYETTFGKMQERFPGRALEKAVKGMLPKCPLGYAMIKKLKVYAEATHPHSAQQPKALEI</sequence>
<comment type="function">
    <text evidence="1">This protein is one of the early assembly proteins of the 50S ribosomal subunit, although it is not seen to bind rRNA by itself. It is important during the early stages of 50S assembly.</text>
</comment>
<comment type="subunit">
    <text evidence="1">Part of the 50S ribosomal subunit.</text>
</comment>
<comment type="similarity">
    <text evidence="1">Belongs to the universal ribosomal protein uL13 family.</text>
</comment>
<proteinExistence type="inferred from homology"/>
<evidence type="ECO:0000255" key="1">
    <source>
        <dbReference type="HAMAP-Rule" id="MF_01366"/>
    </source>
</evidence>
<evidence type="ECO:0000305" key="2"/>
<accession>A2S581</accession>
<name>RL13_BURM9</name>
<keyword id="KW-0687">Ribonucleoprotein</keyword>
<keyword id="KW-0689">Ribosomal protein</keyword>
<feature type="chain" id="PRO_1000055356" description="Large ribosomal subunit protein uL13">
    <location>
        <begin position="1"/>
        <end position="142"/>
    </location>
</feature>
<gene>
    <name evidence="1" type="primary">rplM</name>
    <name type="ordered locus">BMA10229_A1115</name>
</gene>
<protein>
    <recommendedName>
        <fullName evidence="1">Large ribosomal subunit protein uL13</fullName>
    </recommendedName>
    <alternativeName>
        <fullName evidence="2">50S ribosomal protein L13</fullName>
    </alternativeName>
</protein>